<feature type="chain" id="PRO_1000123088" description="Glycerol-3-phosphate acyltransferase">
    <location>
        <begin position="1"/>
        <end position="828"/>
    </location>
</feature>
<feature type="short sequence motif" description="HXXXXD motif">
    <location>
        <begin position="309"/>
        <end position="314"/>
    </location>
</feature>
<reference key="1">
    <citation type="submission" date="2008-02" db="EMBL/GenBank/DDBJ databases">
        <title>Complete sequence of Pseudomonas putida W619.</title>
        <authorList>
            <person name="Copeland A."/>
            <person name="Lucas S."/>
            <person name="Lapidus A."/>
            <person name="Barry K."/>
            <person name="Detter J.C."/>
            <person name="Glavina del Rio T."/>
            <person name="Dalin E."/>
            <person name="Tice H."/>
            <person name="Pitluck S."/>
            <person name="Chain P."/>
            <person name="Malfatti S."/>
            <person name="Shin M."/>
            <person name="Vergez L."/>
            <person name="Schmutz J."/>
            <person name="Larimer F."/>
            <person name="Land M."/>
            <person name="Hauser L."/>
            <person name="Kyrpides N."/>
            <person name="Kim E."/>
            <person name="Taghavi S."/>
            <person name="Vangronsveld D."/>
            <person name="van der Lelie D."/>
            <person name="Richardson P."/>
        </authorList>
    </citation>
    <scope>NUCLEOTIDE SEQUENCE [LARGE SCALE GENOMIC DNA]</scope>
    <source>
        <strain>W619</strain>
    </source>
</reference>
<organism>
    <name type="scientific">Pseudomonas putida (strain W619)</name>
    <dbReference type="NCBI Taxonomy" id="390235"/>
    <lineage>
        <taxon>Bacteria</taxon>
        <taxon>Pseudomonadati</taxon>
        <taxon>Pseudomonadota</taxon>
        <taxon>Gammaproteobacteria</taxon>
        <taxon>Pseudomonadales</taxon>
        <taxon>Pseudomonadaceae</taxon>
        <taxon>Pseudomonas</taxon>
    </lineage>
</organism>
<protein>
    <recommendedName>
        <fullName evidence="1">Glycerol-3-phosphate acyltransferase</fullName>
        <shortName evidence="1">GPAT</shortName>
        <ecNumber evidence="1">2.3.1.15</ecNumber>
    </recommendedName>
</protein>
<sequence length="828" mass="93727">MTRSPLRRLIFGALRRLLYLWVRSETINQSAMSLQLDRSRPVFYALPSPSLTDLAVLDHECTKAGLPRPVLPVAVGTLHEPAGFFYLTPDPDWLGRHDKRGAPPTLERVIAAVSQHAEEDAQIIPVSVFWGQTPASESSPWKLLFADSWAVTGRLRRLLTILILGRKTRVQFSAPIQVRDLVQHNKGHERTVRMAQRLMRVHFRNLKTAVIGPDISHRRNLVKGLVHAPLVRQAINEQAQRENIPVAKAEAQALRYGNEIASDYTYTAIRFLEVVLSWFWNKIYDGIKVNHIEQVQGIAPGHEVIYVPCHRSHIDYLLLSYLLFRNGLTPPHIAAGINLNMPVIGGLLRRGGAFFMRRTFKGNPLYTAVFNEYLHTLFTKGFPVEYFVEGGRSRTGRMLQPRTGMLAITLRSFLRSSRTPIVFVPVYIGYERVLEGRTYLGELRGASKKKESIFDIFKVIGALKQRFGQVYVNFGEPIRLAGFLDQQQPGWREQALGPQFRPAWLNETTTRLGETVARHLNEAAAVNPVNLVALALLSTSRLALDESALTRVLDLYLTLLRKVPYSQHTTLPEGDGQALIEHVRGMNLLAEQKDALGRILYLDEANAVLMTYYRNNVLHIFALPALLASFFHSSSRMSRDLLGQYVHALYPYLQAELFLRWAPEQLDEVIDQWLAALVEQGLLRRENDLYVRPAPSSRQFVLLTLLARTITQTLQRFYMATSLLLNSGQNTLSAEALEDLCVMMAQRLSILHGLNAPEFFDKTLFRHFIQTLVEQGVLRPDGNGKLGYHDKLGELAEGVAKRVLSAELRLSIRQVALHREHALEASIL</sequence>
<keyword id="KW-0012">Acyltransferase</keyword>
<keyword id="KW-0997">Cell inner membrane</keyword>
<keyword id="KW-1003">Cell membrane</keyword>
<keyword id="KW-0444">Lipid biosynthesis</keyword>
<keyword id="KW-0443">Lipid metabolism</keyword>
<keyword id="KW-0472">Membrane</keyword>
<keyword id="KW-0594">Phospholipid biosynthesis</keyword>
<keyword id="KW-1208">Phospholipid metabolism</keyword>
<keyword id="KW-0808">Transferase</keyword>
<gene>
    <name evidence="1" type="primary">plsB</name>
    <name type="ordered locus">PputW619_4098</name>
</gene>
<proteinExistence type="inferred from homology"/>
<name>PLSB_PSEPW</name>
<accession>B1JBS6</accession>
<comment type="catalytic activity">
    <reaction evidence="1">
        <text>sn-glycerol 3-phosphate + an acyl-CoA = a 1-acyl-sn-glycero-3-phosphate + CoA</text>
        <dbReference type="Rhea" id="RHEA:15325"/>
        <dbReference type="ChEBI" id="CHEBI:57287"/>
        <dbReference type="ChEBI" id="CHEBI:57597"/>
        <dbReference type="ChEBI" id="CHEBI:57970"/>
        <dbReference type="ChEBI" id="CHEBI:58342"/>
        <dbReference type="EC" id="2.3.1.15"/>
    </reaction>
</comment>
<comment type="pathway">
    <text evidence="1">Phospholipid metabolism; CDP-diacylglycerol biosynthesis; CDP-diacylglycerol from sn-glycerol 3-phosphate: step 1/3.</text>
</comment>
<comment type="subcellular location">
    <subcellularLocation>
        <location evidence="1">Cell inner membrane</location>
        <topology evidence="1">Peripheral membrane protein</topology>
        <orientation evidence="1">Cytoplasmic side</orientation>
    </subcellularLocation>
</comment>
<comment type="domain">
    <text evidence="1">The HXXXXD motif is essential for acyltransferase activity and may constitute the binding site for the phosphate moiety of the glycerol-3-phosphate.</text>
</comment>
<comment type="similarity">
    <text evidence="1">Belongs to the GPAT/DAPAT family.</text>
</comment>
<evidence type="ECO:0000255" key="1">
    <source>
        <dbReference type="HAMAP-Rule" id="MF_00393"/>
    </source>
</evidence>
<dbReference type="EC" id="2.3.1.15" evidence="1"/>
<dbReference type="EMBL" id="CP000949">
    <property type="protein sequence ID" value="ACA74578.1"/>
    <property type="molecule type" value="Genomic_DNA"/>
</dbReference>
<dbReference type="SMR" id="B1JBS6"/>
<dbReference type="STRING" id="390235.PputW619_4098"/>
<dbReference type="KEGG" id="ppw:PputW619_4098"/>
<dbReference type="eggNOG" id="COG2937">
    <property type="taxonomic scope" value="Bacteria"/>
</dbReference>
<dbReference type="HOGENOM" id="CLU_015407_0_0_6"/>
<dbReference type="OrthoDB" id="335193at2"/>
<dbReference type="UniPathway" id="UPA00557">
    <property type="reaction ID" value="UER00612"/>
</dbReference>
<dbReference type="GO" id="GO:0005886">
    <property type="term" value="C:plasma membrane"/>
    <property type="evidence" value="ECO:0007669"/>
    <property type="project" value="UniProtKB-SubCell"/>
</dbReference>
<dbReference type="GO" id="GO:0004366">
    <property type="term" value="F:glycerol-3-phosphate O-acyltransferase activity"/>
    <property type="evidence" value="ECO:0007669"/>
    <property type="project" value="UniProtKB-UniRule"/>
</dbReference>
<dbReference type="GO" id="GO:0016024">
    <property type="term" value="P:CDP-diacylglycerol biosynthetic process"/>
    <property type="evidence" value="ECO:0007669"/>
    <property type="project" value="UniProtKB-UniRule"/>
</dbReference>
<dbReference type="GO" id="GO:0006631">
    <property type="term" value="P:fatty acid metabolic process"/>
    <property type="evidence" value="ECO:0007669"/>
    <property type="project" value="TreeGrafter"/>
</dbReference>
<dbReference type="CDD" id="cd07993">
    <property type="entry name" value="LPLAT_DHAPAT-like"/>
    <property type="match status" value="1"/>
</dbReference>
<dbReference type="HAMAP" id="MF_00393">
    <property type="entry name" value="Glyc3P_acyltrans"/>
    <property type="match status" value="1"/>
</dbReference>
<dbReference type="InterPro" id="IPR022284">
    <property type="entry name" value="GPAT/DHAPAT"/>
</dbReference>
<dbReference type="InterPro" id="IPR045520">
    <property type="entry name" value="GPAT/DHAPAT_C"/>
</dbReference>
<dbReference type="InterPro" id="IPR041728">
    <property type="entry name" value="GPAT/DHAPAT_LPLAT"/>
</dbReference>
<dbReference type="InterPro" id="IPR028354">
    <property type="entry name" value="GPAT_PlsB"/>
</dbReference>
<dbReference type="InterPro" id="IPR002123">
    <property type="entry name" value="Plipid/glycerol_acylTrfase"/>
</dbReference>
<dbReference type="NCBIfam" id="TIGR03703">
    <property type="entry name" value="plsB"/>
    <property type="match status" value="1"/>
</dbReference>
<dbReference type="NCBIfam" id="NF003441">
    <property type="entry name" value="PRK04974.1"/>
    <property type="match status" value="1"/>
</dbReference>
<dbReference type="PANTHER" id="PTHR12563:SF17">
    <property type="entry name" value="DIHYDROXYACETONE PHOSPHATE ACYLTRANSFERASE"/>
    <property type="match status" value="1"/>
</dbReference>
<dbReference type="PANTHER" id="PTHR12563">
    <property type="entry name" value="GLYCEROL-3-PHOSPHATE ACYLTRANSFERASE"/>
    <property type="match status" value="1"/>
</dbReference>
<dbReference type="Pfam" id="PF01553">
    <property type="entry name" value="Acyltransferase"/>
    <property type="match status" value="1"/>
</dbReference>
<dbReference type="Pfam" id="PF19277">
    <property type="entry name" value="GPAT_C"/>
    <property type="match status" value="1"/>
</dbReference>
<dbReference type="PIRSF" id="PIRSF500064">
    <property type="entry name" value="GPAT"/>
    <property type="match status" value="1"/>
</dbReference>
<dbReference type="PIRSF" id="PIRSF000437">
    <property type="entry name" value="GPAT_DHAPAT"/>
    <property type="match status" value="1"/>
</dbReference>
<dbReference type="SMART" id="SM00563">
    <property type="entry name" value="PlsC"/>
    <property type="match status" value="1"/>
</dbReference>
<dbReference type="SUPFAM" id="SSF69593">
    <property type="entry name" value="Glycerol-3-phosphate (1)-acyltransferase"/>
    <property type="match status" value="1"/>
</dbReference>